<organism>
    <name type="scientific">Shigella dysenteriae serotype 1 (strain Sd197)</name>
    <dbReference type="NCBI Taxonomy" id="300267"/>
    <lineage>
        <taxon>Bacteria</taxon>
        <taxon>Pseudomonadati</taxon>
        <taxon>Pseudomonadota</taxon>
        <taxon>Gammaproteobacteria</taxon>
        <taxon>Enterobacterales</taxon>
        <taxon>Enterobacteriaceae</taxon>
        <taxon>Shigella</taxon>
    </lineage>
</organism>
<comment type="subcellular location">
    <subcellularLocation>
        <location evidence="1">Cell inner membrane</location>
        <topology evidence="1">Multi-pass membrane protein</topology>
    </subcellularLocation>
</comment>
<comment type="similarity">
    <text evidence="1">Belongs to the UPF0299 family.</text>
</comment>
<keyword id="KW-0997">Cell inner membrane</keyword>
<keyword id="KW-1003">Cell membrane</keyword>
<keyword id="KW-0472">Membrane</keyword>
<keyword id="KW-1185">Reference proteome</keyword>
<keyword id="KW-0812">Transmembrane</keyword>
<keyword id="KW-1133">Transmembrane helix</keyword>
<accession>Q32EM1</accession>
<name>YOHJ_SHIDS</name>
<protein>
    <recommendedName>
        <fullName evidence="1">UPF0299 membrane protein YohJ</fullName>
    </recommendedName>
</protein>
<feature type="chain" id="PRO_1000065466" description="UPF0299 membrane protein YohJ">
    <location>
        <begin position="1"/>
        <end position="132"/>
    </location>
</feature>
<feature type="transmembrane region" description="Helical" evidence="1">
    <location>
        <begin position="7"/>
        <end position="27"/>
    </location>
</feature>
<feature type="transmembrane region" description="Helical" evidence="1">
    <location>
        <begin position="31"/>
        <end position="51"/>
    </location>
</feature>
<feature type="transmembrane region" description="Helical" evidence="1">
    <location>
        <begin position="63"/>
        <end position="83"/>
    </location>
</feature>
<feature type="transmembrane region" description="Helical" evidence="1">
    <location>
        <begin position="93"/>
        <end position="113"/>
    </location>
</feature>
<sequence>MSKTLNIIWQYLRAFVLIYACLYAGIFIASLLPVTIPGSIIGMLILFVLLALQILPAKWVNPGCYVLIRYMALLFVPIGVGVMQYFDLLRAQFGPVVVSCAISTLVVFLVMSWSSQLVHGERKVVGQKGSEE</sequence>
<evidence type="ECO:0000255" key="1">
    <source>
        <dbReference type="HAMAP-Rule" id="MF_01144"/>
    </source>
</evidence>
<gene>
    <name evidence="1" type="primary">yohJ</name>
    <name type="ordered locus">SDY_2146</name>
</gene>
<proteinExistence type="inferred from homology"/>
<dbReference type="EMBL" id="CP000034">
    <property type="protein sequence ID" value="ABB62234.1"/>
    <property type="molecule type" value="Genomic_DNA"/>
</dbReference>
<dbReference type="RefSeq" id="WP_005021862.1">
    <property type="nucleotide sequence ID" value="NC_007606.1"/>
</dbReference>
<dbReference type="RefSeq" id="YP_403725.1">
    <property type="nucleotide sequence ID" value="NC_007606.1"/>
</dbReference>
<dbReference type="SMR" id="Q32EM1"/>
<dbReference type="STRING" id="300267.SDY_2146"/>
<dbReference type="EnsemblBacteria" id="ABB62234">
    <property type="protein sequence ID" value="ABB62234"/>
    <property type="gene ID" value="SDY_2146"/>
</dbReference>
<dbReference type="KEGG" id="sdy:SDY_2146"/>
<dbReference type="PATRIC" id="fig|300267.13.peg.2593"/>
<dbReference type="HOGENOM" id="CLU_113736_1_1_6"/>
<dbReference type="Proteomes" id="UP000002716">
    <property type="component" value="Chromosome"/>
</dbReference>
<dbReference type="GO" id="GO:0005886">
    <property type="term" value="C:plasma membrane"/>
    <property type="evidence" value="ECO:0007669"/>
    <property type="project" value="UniProtKB-SubCell"/>
</dbReference>
<dbReference type="HAMAP" id="MF_01144">
    <property type="entry name" value="UPF0299"/>
    <property type="match status" value="1"/>
</dbReference>
<dbReference type="InterPro" id="IPR005538">
    <property type="entry name" value="LrgA/CidA"/>
</dbReference>
<dbReference type="InterPro" id="IPR022957">
    <property type="entry name" value="Uncharacterised_UPF0299"/>
</dbReference>
<dbReference type="NCBIfam" id="NF002494">
    <property type="entry name" value="PRK01821.1"/>
    <property type="match status" value="1"/>
</dbReference>
<dbReference type="PANTHER" id="PTHR33931">
    <property type="entry name" value="HOLIN-LIKE PROTEIN CIDA-RELATED"/>
    <property type="match status" value="1"/>
</dbReference>
<dbReference type="PANTHER" id="PTHR33931:SF5">
    <property type="entry name" value="UPF0299 MEMBRANE PROTEIN YOHJ"/>
    <property type="match status" value="1"/>
</dbReference>
<dbReference type="Pfam" id="PF03788">
    <property type="entry name" value="LrgA"/>
    <property type="match status" value="1"/>
</dbReference>
<reference key="1">
    <citation type="journal article" date="2005" name="Nucleic Acids Res.">
        <title>Genome dynamics and diversity of Shigella species, the etiologic agents of bacillary dysentery.</title>
        <authorList>
            <person name="Yang F."/>
            <person name="Yang J."/>
            <person name="Zhang X."/>
            <person name="Chen L."/>
            <person name="Jiang Y."/>
            <person name="Yan Y."/>
            <person name="Tang X."/>
            <person name="Wang J."/>
            <person name="Xiong Z."/>
            <person name="Dong J."/>
            <person name="Xue Y."/>
            <person name="Zhu Y."/>
            <person name="Xu X."/>
            <person name="Sun L."/>
            <person name="Chen S."/>
            <person name="Nie H."/>
            <person name="Peng J."/>
            <person name="Xu J."/>
            <person name="Wang Y."/>
            <person name="Yuan Z."/>
            <person name="Wen Y."/>
            <person name="Yao Z."/>
            <person name="Shen Y."/>
            <person name="Qiang B."/>
            <person name="Hou Y."/>
            <person name="Yu J."/>
            <person name="Jin Q."/>
        </authorList>
    </citation>
    <scope>NUCLEOTIDE SEQUENCE [LARGE SCALE GENOMIC DNA]</scope>
    <source>
        <strain>Sd197</strain>
    </source>
</reference>